<organism>
    <name type="scientific">Mus musculus</name>
    <name type="common">Mouse</name>
    <dbReference type="NCBI Taxonomy" id="10090"/>
    <lineage>
        <taxon>Eukaryota</taxon>
        <taxon>Metazoa</taxon>
        <taxon>Chordata</taxon>
        <taxon>Craniata</taxon>
        <taxon>Vertebrata</taxon>
        <taxon>Euteleostomi</taxon>
        <taxon>Mammalia</taxon>
        <taxon>Eutheria</taxon>
        <taxon>Euarchontoglires</taxon>
        <taxon>Glires</taxon>
        <taxon>Rodentia</taxon>
        <taxon>Myomorpha</taxon>
        <taxon>Muroidea</taxon>
        <taxon>Muridae</taxon>
        <taxon>Murinae</taxon>
        <taxon>Mus</taxon>
        <taxon>Mus</taxon>
    </lineage>
</organism>
<feature type="chain" id="PRO_0000227976" description="Zinc finger protein 280C">
    <location>
        <begin position="1"/>
        <end position="742"/>
    </location>
</feature>
<feature type="zinc finger region" description="C2H2-type 1">
    <location>
        <begin position="323"/>
        <end position="345"/>
    </location>
</feature>
<feature type="zinc finger region" description="C2H2-type 2">
    <location>
        <begin position="360"/>
        <end position="383"/>
    </location>
</feature>
<feature type="zinc finger region" description="C2H2-type 3">
    <location>
        <begin position="390"/>
        <end position="413"/>
    </location>
</feature>
<feature type="zinc finger region" description="C2H2-type 4">
    <location>
        <begin position="420"/>
        <end position="443"/>
    </location>
</feature>
<feature type="zinc finger region" description="C2H2-type 5">
    <location>
        <begin position="477"/>
        <end position="499"/>
    </location>
</feature>
<feature type="region of interest" description="Disordered" evidence="2">
    <location>
        <begin position="138"/>
        <end position="243"/>
    </location>
</feature>
<feature type="region of interest" description="Disordered" evidence="2">
    <location>
        <begin position="523"/>
        <end position="608"/>
    </location>
</feature>
<feature type="compositionally biased region" description="Polar residues" evidence="2">
    <location>
        <begin position="138"/>
        <end position="168"/>
    </location>
</feature>
<feature type="compositionally biased region" description="Polar residues" evidence="2">
    <location>
        <begin position="182"/>
        <end position="191"/>
    </location>
</feature>
<feature type="compositionally biased region" description="Low complexity" evidence="2">
    <location>
        <begin position="200"/>
        <end position="222"/>
    </location>
</feature>
<feature type="compositionally biased region" description="Polar residues" evidence="2">
    <location>
        <begin position="223"/>
        <end position="243"/>
    </location>
</feature>
<feature type="compositionally biased region" description="Low complexity" evidence="2">
    <location>
        <begin position="523"/>
        <end position="578"/>
    </location>
</feature>
<feature type="compositionally biased region" description="Polar residues" evidence="2">
    <location>
        <begin position="579"/>
        <end position="592"/>
    </location>
</feature>
<feature type="compositionally biased region" description="Basic residues" evidence="2">
    <location>
        <begin position="593"/>
        <end position="608"/>
    </location>
</feature>
<feature type="cross-link" description="Glycyl lysine isopeptide (Lys-Gly) (interchain with G-Cter in SUMO2)" evidence="1">
    <location>
        <position position="10"/>
    </location>
</feature>
<feature type="cross-link" description="Glycyl lysine isopeptide (Lys-Gly) (interchain with G-Cter in SUMO2)" evidence="1">
    <location>
        <position position="23"/>
    </location>
</feature>
<feature type="cross-link" description="Glycyl lysine isopeptide (Lys-Gly) (interchain with G-Cter in SUMO2)" evidence="1">
    <location>
        <position position="42"/>
    </location>
</feature>
<feature type="cross-link" description="Glycyl lysine isopeptide (Lys-Gly) (interchain with G-Cter in SUMO2)" evidence="1">
    <location>
        <position position="65"/>
    </location>
</feature>
<feature type="cross-link" description="Glycyl lysine isopeptide (Lys-Gly) (interchain with G-Cter in SUMO2)" evidence="1">
    <location>
        <position position="85"/>
    </location>
</feature>
<feature type="cross-link" description="Glycyl lysine isopeptide (Lys-Gly) (interchain with G-Cter in SUMO2)" evidence="1">
    <location>
        <position position="123"/>
    </location>
</feature>
<feature type="cross-link" description="Glycyl lysine isopeptide (Lys-Gly) (interchain with G-Cter in SUMO2)" evidence="1">
    <location>
        <position position="135"/>
    </location>
</feature>
<feature type="cross-link" description="Glycyl lysine isopeptide (Lys-Gly) (interchain with G-Cter in SUMO2)" evidence="1">
    <location>
        <position position="180"/>
    </location>
</feature>
<feature type="cross-link" description="Glycyl lysine isopeptide (Lys-Gly) (interchain with G-Cter in SUMO2)" evidence="1">
    <location>
        <position position="186"/>
    </location>
</feature>
<feature type="cross-link" description="Glycyl lysine isopeptide (Lys-Gly) (interchain with G-Cter in SUMO2)" evidence="1">
    <location>
        <position position="193"/>
    </location>
</feature>
<feature type="cross-link" description="Glycyl lysine isopeptide (Lys-Gly) (interchain with G-Cter in SUMO2)" evidence="1">
    <location>
        <position position="580"/>
    </location>
</feature>
<feature type="splice variant" id="VSP_017619" description="In isoform 3." evidence="3">
    <location>
        <begin position="11"/>
        <end position="19"/>
    </location>
</feature>
<feature type="splice variant" id="VSP_017620" description="In isoform 2." evidence="4">
    <original>RGITLVCL</original>
    <variation>SYRKSRNF</variation>
    <location>
        <begin position="686"/>
        <end position="693"/>
    </location>
</feature>
<feature type="splice variant" id="VSP_017621" description="In isoform 2." evidence="4">
    <location>
        <begin position="694"/>
        <end position="742"/>
    </location>
</feature>
<dbReference type="EMBL" id="AK129399">
    <property type="protein sequence ID" value="BAC98209.1"/>
    <property type="status" value="ALT_INIT"/>
    <property type="molecule type" value="mRNA"/>
</dbReference>
<dbReference type="EMBL" id="AK141491">
    <property type="protein sequence ID" value="BAE24700.1"/>
    <property type="molecule type" value="mRNA"/>
</dbReference>
<dbReference type="EMBL" id="AL669901">
    <property type="status" value="NOT_ANNOTATED_CDS"/>
    <property type="molecule type" value="Genomic_DNA"/>
</dbReference>
<dbReference type="EMBL" id="BC028839">
    <property type="protein sequence ID" value="AAH28839.1"/>
    <property type="molecule type" value="mRNA"/>
</dbReference>
<dbReference type="EMBL" id="BC051397">
    <property type="protein sequence ID" value="AAH51397.1"/>
    <property type="molecule type" value="mRNA"/>
</dbReference>
<dbReference type="EMBL" id="BC063775">
    <property type="protein sequence ID" value="AAH63775.1"/>
    <property type="molecule type" value="mRNA"/>
</dbReference>
<dbReference type="CCDS" id="CCDS30111.1">
    <molecule id="Q6P3Y5-1"/>
</dbReference>
<dbReference type="CCDS" id="CCDS53064.1">
    <molecule id="Q6P3Y5-3"/>
</dbReference>
<dbReference type="CCDS" id="CCDS53065.1">
    <molecule id="Q6P3Y5-2"/>
</dbReference>
<dbReference type="RefSeq" id="NP_001160120.1">
    <molecule id="Q6P3Y5-1"/>
    <property type="nucleotide sequence ID" value="NM_001166648.1"/>
</dbReference>
<dbReference type="RefSeq" id="NP_001160121.1">
    <molecule id="Q6P3Y5-3"/>
    <property type="nucleotide sequence ID" value="NM_001166649.1"/>
</dbReference>
<dbReference type="RefSeq" id="NP_001160122.1">
    <molecule id="Q6P3Y5-2"/>
    <property type="nucleotide sequence ID" value="NM_001166650.1"/>
</dbReference>
<dbReference type="RefSeq" id="NP_705760.2">
    <molecule id="Q6P3Y5-1"/>
    <property type="nucleotide sequence ID" value="NM_153532.3"/>
</dbReference>
<dbReference type="RefSeq" id="XP_006541521.1">
    <molecule id="Q6P3Y5-1"/>
    <property type="nucleotide sequence ID" value="XM_006541458.3"/>
</dbReference>
<dbReference type="RefSeq" id="XP_006541522.1">
    <molecule id="Q6P3Y5-1"/>
    <property type="nucleotide sequence ID" value="XM_006541459.3"/>
</dbReference>
<dbReference type="RefSeq" id="XP_006541524.1">
    <property type="nucleotide sequence ID" value="XM_006541461.3"/>
</dbReference>
<dbReference type="RefSeq" id="XP_006541528.1">
    <property type="nucleotide sequence ID" value="XM_006541465.3"/>
</dbReference>
<dbReference type="BioGRID" id="229030">
    <property type="interactions" value="4"/>
</dbReference>
<dbReference type="FunCoup" id="Q6P3Y5">
    <property type="interactions" value="253"/>
</dbReference>
<dbReference type="STRING" id="10090.ENSMUSP00000075933"/>
<dbReference type="iPTMnet" id="Q6P3Y5"/>
<dbReference type="PhosphoSitePlus" id="Q6P3Y5"/>
<dbReference type="jPOST" id="Q6P3Y5"/>
<dbReference type="PaxDb" id="10090-ENSMUSP00000075933"/>
<dbReference type="PeptideAtlas" id="Q6P3Y5"/>
<dbReference type="ProteomicsDB" id="275255">
    <molecule id="Q6P3Y5-1"/>
</dbReference>
<dbReference type="ProteomicsDB" id="275256">
    <molecule id="Q6P3Y5-2"/>
</dbReference>
<dbReference type="ProteomicsDB" id="275257">
    <molecule id="Q6P3Y5-3"/>
</dbReference>
<dbReference type="Pumba" id="Q6P3Y5"/>
<dbReference type="Antibodypedia" id="30167">
    <property type="antibodies" value="75 antibodies from 22 providers"/>
</dbReference>
<dbReference type="DNASU" id="208968"/>
<dbReference type="Ensembl" id="ENSMUST00000072292.12">
    <molecule id="Q6P3Y5-3"/>
    <property type="protein sequence ID" value="ENSMUSP00000072138.6"/>
    <property type="gene ID" value="ENSMUSG00000036916.14"/>
</dbReference>
<dbReference type="Ensembl" id="ENSMUST00000076635.13">
    <molecule id="Q6P3Y5-1"/>
    <property type="protein sequence ID" value="ENSMUSP00000075933.7"/>
    <property type="gene ID" value="ENSMUSG00000036916.14"/>
</dbReference>
<dbReference type="Ensembl" id="ENSMUST00000088898.11">
    <molecule id="Q6P3Y5-1"/>
    <property type="protein sequence ID" value="ENSMUSP00000086288.5"/>
    <property type="gene ID" value="ENSMUSG00000036916.14"/>
</dbReference>
<dbReference type="Ensembl" id="ENSMUST00000114940.9">
    <molecule id="Q6P3Y5-2"/>
    <property type="protein sequence ID" value="ENSMUSP00000110590.3"/>
    <property type="gene ID" value="ENSMUSG00000036916.14"/>
</dbReference>
<dbReference type="GeneID" id="208968"/>
<dbReference type="KEGG" id="mmu:208968"/>
<dbReference type="UCSC" id="uc009tcj.1">
    <molecule id="Q6P3Y5-2"/>
    <property type="organism name" value="mouse"/>
</dbReference>
<dbReference type="UCSC" id="uc009tck.1">
    <molecule id="Q6P3Y5-1"/>
    <property type="organism name" value="mouse"/>
</dbReference>
<dbReference type="UCSC" id="uc009tcm.2">
    <molecule id="Q6P3Y5-3"/>
    <property type="organism name" value="mouse"/>
</dbReference>
<dbReference type="AGR" id="MGI:2387585"/>
<dbReference type="CTD" id="208968"/>
<dbReference type="MGI" id="MGI:2387585">
    <property type="gene designation" value="Zfp280c"/>
</dbReference>
<dbReference type="VEuPathDB" id="HostDB:ENSMUSG00000036916"/>
<dbReference type="eggNOG" id="KOG1721">
    <property type="taxonomic scope" value="Eukaryota"/>
</dbReference>
<dbReference type="GeneTree" id="ENSGT00940000162128"/>
<dbReference type="HOGENOM" id="CLU_010097_1_0_1"/>
<dbReference type="InParanoid" id="Q6P3Y5"/>
<dbReference type="OMA" id="PKCNIQF"/>
<dbReference type="OrthoDB" id="10032537at2759"/>
<dbReference type="PhylomeDB" id="Q6P3Y5"/>
<dbReference type="TreeFam" id="TF331707"/>
<dbReference type="BioGRID-ORCS" id="208968">
    <property type="hits" value="1 hit in 79 CRISPR screens"/>
</dbReference>
<dbReference type="ChiTaRS" id="Zfp280c">
    <property type="organism name" value="mouse"/>
</dbReference>
<dbReference type="PRO" id="PR:Q6P3Y5"/>
<dbReference type="Proteomes" id="UP000000589">
    <property type="component" value="Chromosome X"/>
</dbReference>
<dbReference type="RNAct" id="Q6P3Y5">
    <property type="molecule type" value="protein"/>
</dbReference>
<dbReference type="Bgee" id="ENSMUSG00000036916">
    <property type="expression patterns" value="Expressed in humerus cartilage element and 242 other cell types or tissues"/>
</dbReference>
<dbReference type="GO" id="GO:0005634">
    <property type="term" value="C:nucleus"/>
    <property type="evidence" value="ECO:0007669"/>
    <property type="project" value="UniProtKB-SubCell"/>
</dbReference>
<dbReference type="GO" id="GO:0003677">
    <property type="term" value="F:DNA binding"/>
    <property type="evidence" value="ECO:0007669"/>
    <property type="project" value="UniProtKB-KW"/>
</dbReference>
<dbReference type="GO" id="GO:0008270">
    <property type="term" value="F:zinc ion binding"/>
    <property type="evidence" value="ECO:0007669"/>
    <property type="project" value="UniProtKB-KW"/>
</dbReference>
<dbReference type="FunFam" id="3.30.160.60:FF:000298">
    <property type="entry name" value="zinc finger protein 280D isoform X1"/>
    <property type="match status" value="1"/>
</dbReference>
<dbReference type="Gene3D" id="3.30.160.60">
    <property type="entry name" value="Classic Zinc Finger"/>
    <property type="match status" value="1"/>
</dbReference>
<dbReference type="InterPro" id="IPR025243">
    <property type="entry name" value="DUF4195"/>
</dbReference>
<dbReference type="InterPro" id="IPR050527">
    <property type="entry name" value="Snail/Krueppel_Znf"/>
</dbReference>
<dbReference type="InterPro" id="IPR036236">
    <property type="entry name" value="Znf_C2H2_sf"/>
</dbReference>
<dbReference type="InterPro" id="IPR013087">
    <property type="entry name" value="Znf_C2H2_type"/>
</dbReference>
<dbReference type="PANTHER" id="PTHR24388">
    <property type="entry name" value="ZINC FINGER PROTEIN"/>
    <property type="match status" value="1"/>
</dbReference>
<dbReference type="PANTHER" id="PTHR24388:SF62">
    <property type="entry name" value="ZINC FINGER PROTEIN 280C"/>
    <property type="match status" value="1"/>
</dbReference>
<dbReference type="Pfam" id="PF13836">
    <property type="entry name" value="DUF4195"/>
    <property type="match status" value="1"/>
</dbReference>
<dbReference type="Pfam" id="PF25414">
    <property type="entry name" value="zf-C2H2_Z280C_D"/>
    <property type="match status" value="1"/>
</dbReference>
<dbReference type="Pfam" id="PF25429">
    <property type="entry name" value="zf-POGZ"/>
    <property type="match status" value="1"/>
</dbReference>
<dbReference type="SMART" id="SM00355">
    <property type="entry name" value="ZnF_C2H2"/>
    <property type="match status" value="10"/>
</dbReference>
<dbReference type="SUPFAM" id="SSF57667">
    <property type="entry name" value="beta-beta-alpha zinc fingers"/>
    <property type="match status" value="1"/>
</dbReference>
<dbReference type="PROSITE" id="PS00028">
    <property type="entry name" value="ZINC_FINGER_C2H2_1"/>
    <property type="match status" value="4"/>
</dbReference>
<keyword id="KW-0025">Alternative splicing</keyword>
<keyword id="KW-0238">DNA-binding</keyword>
<keyword id="KW-1017">Isopeptide bond</keyword>
<keyword id="KW-0479">Metal-binding</keyword>
<keyword id="KW-0539">Nucleus</keyword>
<keyword id="KW-1185">Reference proteome</keyword>
<keyword id="KW-0677">Repeat</keyword>
<keyword id="KW-0804">Transcription</keyword>
<keyword id="KW-0805">Transcription regulation</keyword>
<keyword id="KW-0832">Ubl conjugation</keyword>
<keyword id="KW-0862">Zinc</keyword>
<keyword id="KW-0863">Zinc-finger</keyword>
<accession>Q6P3Y5</accession>
<accession>B1AU28</accession>
<accession>B1AU29</accession>
<accession>Q6ZPM2</accession>
<accession>Q8K145</accession>
<name>Z280C_MOUSE</name>
<gene>
    <name type="primary">Znf280c</name>
    <name type="synonym">Kiaa1584</name>
    <name type="synonym">Suhw3</name>
    <name type="synonym">Zfp280c</name>
</gene>
<protein>
    <recommendedName>
        <fullName>Zinc finger protein 280C</fullName>
    </recommendedName>
    <alternativeName>
        <fullName>Suppressor of hairy wing homolog 3</fullName>
    </alternativeName>
</protein>
<reference key="1">
    <citation type="journal article" date="2003" name="DNA Res.">
        <title>Prediction of the coding sequences of mouse homologues of KIAA gene: III. The complete nucleotide sequences of 500 mouse KIAA-homologous cDNAs identified by screening of terminal sequences of cDNA clones randomly sampled from size-fractionated libraries.</title>
        <authorList>
            <person name="Okazaki N."/>
            <person name="Kikuno R."/>
            <person name="Ohara R."/>
            <person name="Inamoto S."/>
            <person name="Koseki H."/>
            <person name="Hiraoka S."/>
            <person name="Saga Y."/>
            <person name="Nagase T."/>
            <person name="Ohara O."/>
            <person name="Koga H."/>
        </authorList>
    </citation>
    <scope>NUCLEOTIDE SEQUENCE [LARGE SCALE MRNA] (ISOFORM 3)</scope>
    <source>
        <tissue>Embryonic tail</tissue>
    </source>
</reference>
<reference key="2">
    <citation type="journal article" date="2005" name="Science">
        <title>The transcriptional landscape of the mammalian genome.</title>
        <authorList>
            <person name="Carninci P."/>
            <person name="Kasukawa T."/>
            <person name="Katayama S."/>
            <person name="Gough J."/>
            <person name="Frith M.C."/>
            <person name="Maeda N."/>
            <person name="Oyama R."/>
            <person name="Ravasi T."/>
            <person name="Lenhard B."/>
            <person name="Wells C."/>
            <person name="Kodzius R."/>
            <person name="Shimokawa K."/>
            <person name="Bajic V.B."/>
            <person name="Brenner S.E."/>
            <person name="Batalov S."/>
            <person name="Forrest A.R."/>
            <person name="Zavolan M."/>
            <person name="Davis M.J."/>
            <person name="Wilming L.G."/>
            <person name="Aidinis V."/>
            <person name="Allen J.E."/>
            <person name="Ambesi-Impiombato A."/>
            <person name="Apweiler R."/>
            <person name="Aturaliya R.N."/>
            <person name="Bailey T.L."/>
            <person name="Bansal M."/>
            <person name="Baxter L."/>
            <person name="Beisel K.W."/>
            <person name="Bersano T."/>
            <person name="Bono H."/>
            <person name="Chalk A.M."/>
            <person name="Chiu K.P."/>
            <person name="Choudhary V."/>
            <person name="Christoffels A."/>
            <person name="Clutterbuck D.R."/>
            <person name="Crowe M.L."/>
            <person name="Dalla E."/>
            <person name="Dalrymple B.P."/>
            <person name="de Bono B."/>
            <person name="Della Gatta G."/>
            <person name="di Bernardo D."/>
            <person name="Down T."/>
            <person name="Engstrom P."/>
            <person name="Fagiolini M."/>
            <person name="Faulkner G."/>
            <person name="Fletcher C.F."/>
            <person name="Fukushima T."/>
            <person name="Furuno M."/>
            <person name="Futaki S."/>
            <person name="Gariboldi M."/>
            <person name="Georgii-Hemming P."/>
            <person name="Gingeras T.R."/>
            <person name="Gojobori T."/>
            <person name="Green R.E."/>
            <person name="Gustincich S."/>
            <person name="Harbers M."/>
            <person name="Hayashi Y."/>
            <person name="Hensch T.K."/>
            <person name="Hirokawa N."/>
            <person name="Hill D."/>
            <person name="Huminiecki L."/>
            <person name="Iacono M."/>
            <person name="Ikeo K."/>
            <person name="Iwama A."/>
            <person name="Ishikawa T."/>
            <person name="Jakt M."/>
            <person name="Kanapin A."/>
            <person name="Katoh M."/>
            <person name="Kawasawa Y."/>
            <person name="Kelso J."/>
            <person name="Kitamura H."/>
            <person name="Kitano H."/>
            <person name="Kollias G."/>
            <person name="Krishnan S.P."/>
            <person name="Kruger A."/>
            <person name="Kummerfeld S.K."/>
            <person name="Kurochkin I.V."/>
            <person name="Lareau L.F."/>
            <person name="Lazarevic D."/>
            <person name="Lipovich L."/>
            <person name="Liu J."/>
            <person name="Liuni S."/>
            <person name="McWilliam S."/>
            <person name="Madan Babu M."/>
            <person name="Madera M."/>
            <person name="Marchionni L."/>
            <person name="Matsuda H."/>
            <person name="Matsuzawa S."/>
            <person name="Miki H."/>
            <person name="Mignone F."/>
            <person name="Miyake S."/>
            <person name="Morris K."/>
            <person name="Mottagui-Tabar S."/>
            <person name="Mulder N."/>
            <person name="Nakano N."/>
            <person name="Nakauchi H."/>
            <person name="Ng P."/>
            <person name="Nilsson R."/>
            <person name="Nishiguchi S."/>
            <person name="Nishikawa S."/>
            <person name="Nori F."/>
            <person name="Ohara O."/>
            <person name="Okazaki Y."/>
            <person name="Orlando V."/>
            <person name="Pang K.C."/>
            <person name="Pavan W.J."/>
            <person name="Pavesi G."/>
            <person name="Pesole G."/>
            <person name="Petrovsky N."/>
            <person name="Piazza S."/>
            <person name="Reed J."/>
            <person name="Reid J.F."/>
            <person name="Ring B.Z."/>
            <person name="Ringwald M."/>
            <person name="Rost B."/>
            <person name="Ruan Y."/>
            <person name="Salzberg S.L."/>
            <person name="Sandelin A."/>
            <person name="Schneider C."/>
            <person name="Schoenbach C."/>
            <person name="Sekiguchi K."/>
            <person name="Semple C.A."/>
            <person name="Seno S."/>
            <person name="Sessa L."/>
            <person name="Sheng Y."/>
            <person name="Shibata Y."/>
            <person name="Shimada H."/>
            <person name="Shimada K."/>
            <person name="Silva D."/>
            <person name="Sinclair B."/>
            <person name="Sperling S."/>
            <person name="Stupka E."/>
            <person name="Sugiura K."/>
            <person name="Sultana R."/>
            <person name="Takenaka Y."/>
            <person name="Taki K."/>
            <person name="Tammoja K."/>
            <person name="Tan S.L."/>
            <person name="Tang S."/>
            <person name="Taylor M.S."/>
            <person name="Tegner J."/>
            <person name="Teichmann S.A."/>
            <person name="Ueda H.R."/>
            <person name="van Nimwegen E."/>
            <person name="Verardo R."/>
            <person name="Wei C.L."/>
            <person name="Yagi K."/>
            <person name="Yamanishi H."/>
            <person name="Zabarovsky E."/>
            <person name="Zhu S."/>
            <person name="Zimmer A."/>
            <person name="Hide W."/>
            <person name="Bult C."/>
            <person name="Grimmond S.M."/>
            <person name="Teasdale R.D."/>
            <person name="Liu E.T."/>
            <person name="Brusic V."/>
            <person name="Quackenbush J."/>
            <person name="Wahlestedt C."/>
            <person name="Mattick J.S."/>
            <person name="Hume D.A."/>
            <person name="Kai C."/>
            <person name="Sasaki D."/>
            <person name="Tomaru Y."/>
            <person name="Fukuda S."/>
            <person name="Kanamori-Katayama M."/>
            <person name="Suzuki M."/>
            <person name="Aoki J."/>
            <person name="Arakawa T."/>
            <person name="Iida J."/>
            <person name="Imamura K."/>
            <person name="Itoh M."/>
            <person name="Kato T."/>
            <person name="Kawaji H."/>
            <person name="Kawagashira N."/>
            <person name="Kawashima T."/>
            <person name="Kojima M."/>
            <person name="Kondo S."/>
            <person name="Konno H."/>
            <person name="Nakano K."/>
            <person name="Ninomiya N."/>
            <person name="Nishio T."/>
            <person name="Okada M."/>
            <person name="Plessy C."/>
            <person name="Shibata K."/>
            <person name="Shiraki T."/>
            <person name="Suzuki S."/>
            <person name="Tagami M."/>
            <person name="Waki K."/>
            <person name="Watahiki A."/>
            <person name="Okamura-Oho Y."/>
            <person name="Suzuki H."/>
            <person name="Kawai J."/>
            <person name="Hayashizaki Y."/>
        </authorList>
    </citation>
    <scope>NUCLEOTIDE SEQUENCE [LARGE SCALE MRNA] (ISOFORM 1)</scope>
    <source>
        <strain>C57BL/6J</strain>
        <tissue>Spinal cord</tissue>
    </source>
</reference>
<reference key="3">
    <citation type="journal article" date="2009" name="PLoS Biol.">
        <title>Lineage-specific biology revealed by a finished genome assembly of the mouse.</title>
        <authorList>
            <person name="Church D.M."/>
            <person name="Goodstadt L."/>
            <person name="Hillier L.W."/>
            <person name="Zody M.C."/>
            <person name="Goldstein S."/>
            <person name="She X."/>
            <person name="Bult C.J."/>
            <person name="Agarwala R."/>
            <person name="Cherry J.L."/>
            <person name="DiCuccio M."/>
            <person name="Hlavina W."/>
            <person name="Kapustin Y."/>
            <person name="Meric P."/>
            <person name="Maglott D."/>
            <person name="Birtle Z."/>
            <person name="Marques A.C."/>
            <person name="Graves T."/>
            <person name="Zhou S."/>
            <person name="Teague B."/>
            <person name="Potamousis K."/>
            <person name="Churas C."/>
            <person name="Place M."/>
            <person name="Herschleb J."/>
            <person name="Runnheim R."/>
            <person name="Forrest D."/>
            <person name="Amos-Landgraf J."/>
            <person name="Schwartz D.C."/>
            <person name="Cheng Z."/>
            <person name="Lindblad-Toh K."/>
            <person name="Eichler E.E."/>
            <person name="Ponting C.P."/>
        </authorList>
    </citation>
    <scope>NUCLEOTIDE SEQUENCE [LARGE SCALE GENOMIC DNA]</scope>
    <source>
        <strain>C57BL/6J</strain>
    </source>
</reference>
<reference key="4">
    <citation type="journal article" date="2004" name="Genome Res.">
        <title>The status, quality, and expansion of the NIH full-length cDNA project: the Mammalian Gene Collection (MGC).</title>
        <authorList>
            <consortium name="The MGC Project Team"/>
        </authorList>
    </citation>
    <scope>NUCLEOTIDE SEQUENCE [LARGE SCALE MRNA] (ISOFORMS 1 AND 2)</scope>
    <source>
        <strain>FVB/N-3</strain>
        <tissue>Mammary tumor</tissue>
    </source>
</reference>
<reference key="5">
    <citation type="journal article" date="2010" name="Cell">
        <title>A tissue-specific atlas of mouse protein phosphorylation and expression.</title>
        <authorList>
            <person name="Huttlin E.L."/>
            <person name="Jedrychowski M.P."/>
            <person name="Elias J.E."/>
            <person name="Goswami T."/>
            <person name="Rad R."/>
            <person name="Beausoleil S.A."/>
            <person name="Villen J."/>
            <person name="Haas W."/>
            <person name="Sowa M.E."/>
            <person name="Gygi S.P."/>
        </authorList>
    </citation>
    <scope>IDENTIFICATION BY MASS SPECTROMETRY [LARGE SCALE ANALYSIS]</scope>
    <source>
        <tissue>Testis</tissue>
    </source>
</reference>
<comment type="function">
    <text>May function as a transcription factor.</text>
</comment>
<comment type="subcellular location">
    <subcellularLocation>
        <location evidence="5">Nucleus</location>
    </subcellularLocation>
</comment>
<comment type="alternative products">
    <event type="alternative splicing"/>
    <isoform>
        <id>Q6P3Y5-1</id>
        <name>1</name>
        <sequence type="displayed"/>
    </isoform>
    <isoform>
        <id>Q6P3Y5-2</id>
        <name>2</name>
        <sequence type="described" ref="VSP_017620 VSP_017621"/>
    </isoform>
    <isoform>
        <id>Q6P3Y5-3</id>
        <name>3</name>
        <sequence type="described" ref="VSP_017619"/>
    </isoform>
</comment>
<comment type="sequence caution" evidence="5">
    <conflict type="erroneous initiation">
        <sequence resource="EMBL-CDS" id="BAC98209"/>
    </conflict>
</comment>
<evidence type="ECO:0000250" key="1">
    <source>
        <dbReference type="UniProtKB" id="Q8ND82"/>
    </source>
</evidence>
<evidence type="ECO:0000256" key="2">
    <source>
        <dbReference type="SAM" id="MobiDB-lite"/>
    </source>
</evidence>
<evidence type="ECO:0000303" key="3">
    <source>
    </source>
</evidence>
<evidence type="ECO:0000303" key="4">
    <source>
    </source>
</evidence>
<evidence type="ECO:0000305" key="5"/>
<sequence>MDKDNSVQEKGLFLSSWKLDNSKMAELFMECEEEELEPWQQKVEESQSKDDDDELIFVGEISSSKPAISNILNRCSPGSSSKGLKNGSFNPAISNIFKPTSQHYRNPSSNALVALPSFHPALKSSESSDGQTVSKLDFTKTSPQEDSGACSVSQSDSTQDIPSSNILQPRTGVDQTLGLKHPSTSKVNSVNPKKPKTSASISETRPCSSSSSQTAPSGASSQTVLSNVNTSSVQSAPGSSSLRSCPKCNVKFRLLDPLKCHMKRCCPDMINKFLETLKSENSKAVSKATTDSDKEKLIMLVSDFYYGRHEGTIEESQKTHTTFKCFSCTKVLKNNIRFMNHMKHHLELEKQNNETWESHTTCQHCYRQYPNPFQLQCHIESTHTPHDFSTICKICELSFETEHMLLQHMKDTHKPGEMPYICQVCQFRSSIFSDVETHFRSSHENTKNLLCPFCLKVSRMATPYMNHYMRHQKKGIYRCPKCRLQFLTSKEKTEHKLEHRTFIKPKELEGLPPGTKVIIRASLGSSQSRASSPPSSTIPSTSLQLSVPKSKSTTTKNNSKVSANKATTTSPQTVATTTGKPSASKPGTGTTKSKAKPSYKQKRQRTRKNKFSIDLKNLRCHQGSHMCIECRSKIKDFSSHFSTHINCDFCKYTTNCNKAFTNHMSSHNDHPSKQLYIFKKQSRARRGITLVCLKCDFLADTSGLDRMAKHLNQRKTHTCQVVIENVTERAVTSESASDGLFK</sequence>
<proteinExistence type="evidence at protein level"/>